<organism>
    <name type="scientific">Crocosphaera subtropica (strain ATCC 51142 / BH68)</name>
    <name type="common">Cyanothece sp. (strain ATCC 51142)</name>
    <dbReference type="NCBI Taxonomy" id="43989"/>
    <lineage>
        <taxon>Bacteria</taxon>
        <taxon>Bacillati</taxon>
        <taxon>Cyanobacteriota</taxon>
        <taxon>Cyanophyceae</taxon>
        <taxon>Oscillatoriophycideae</taxon>
        <taxon>Chroococcales</taxon>
        <taxon>Aphanothecaceae</taxon>
        <taxon>Crocosphaera</taxon>
        <taxon>Crocosphaera subtropica</taxon>
    </lineage>
</organism>
<proteinExistence type="inferred from homology"/>
<feature type="chain" id="PRO_1000194378" description="Ribosomal RNA small subunit methyltransferase A">
    <location>
        <begin position="1"/>
        <end position="270"/>
    </location>
</feature>
<feature type="binding site" evidence="1">
    <location>
        <position position="11"/>
    </location>
    <ligand>
        <name>S-adenosyl-L-methionine</name>
        <dbReference type="ChEBI" id="CHEBI:59789"/>
    </ligand>
</feature>
<feature type="binding site" evidence="1">
    <location>
        <position position="13"/>
    </location>
    <ligand>
        <name>S-adenosyl-L-methionine</name>
        <dbReference type="ChEBI" id="CHEBI:59789"/>
    </ligand>
</feature>
<feature type="binding site" evidence="1">
    <location>
        <position position="38"/>
    </location>
    <ligand>
        <name>S-adenosyl-L-methionine</name>
        <dbReference type="ChEBI" id="CHEBI:59789"/>
    </ligand>
</feature>
<feature type="binding site" evidence="1">
    <location>
        <position position="59"/>
    </location>
    <ligand>
        <name>S-adenosyl-L-methionine</name>
        <dbReference type="ChEBI" id="CHEBI:59789"/>
    </ligand>
</feature>
<feature type="binding site" evidence="1">
    <location>
        <position position="84"/>
    </location>
    <ligand>
        <name>S-adenosyl-L-methionine</name>
        <dbReference type="ChEBI" id="CHEBI:59789"/>
    </ligand>
</feature>
<feature type="binding site" evidence="1">
    <location>
        <position position="109"/>
    </location>
    <ligand>
        <name>S-adenosyl-L-methionine</name>
        <dbReference type="ChEBI" id="CHEBI:59789"/>
    </ligand>
</feature>
<keyword id="KW-0963">Cytoplasm</keyword>
<keyword id="KW-0489">Methyltransferase</keyword>
<keyword id="KW-1185">Reference proteome</keyword>
<keyword id="KW-0694">RNA-binding</keyword>
<keyword id="KW-0698">rRNA processing</keyword>
<keyword id="KW-0949">S-adenosyl-L-methionine</keyword>
<keyword id="KW-0808">Transferase</keyword>
<name>RSMA_CROS5</name>
<evidence type="ECO:0000255" key="1">
    <source>
        <dbReference type="HAMAP-Rule" id="MF_00607"/>
    </source>
</evidence>
<dbReference type="EC" id="2.1.1.182" evidence="1"/>
<dbReference type="EMBL" id="CP000806">
    <property type="protein sequence ID" value="ACB51846.1"/>
    <property type="molecule type" value="Genomic_DNA"/>
</dbReference>
<dbReference type="RefSeq" id="WP_009544811.1">
    <property type="nucleotide sequence ID" value="NC_010546.1"/>
</dbReference>
<dbReference type="SMR" id="B1WRJ7"/>
<dbReference type="STRING" id="43989.cce_2498"/>
<dbReference type="KEGG" id="cyt:cce_2498"/>
<dbReference type="eggNOG" id="COG0030">
    <property type="taxonomic scope" value="Bacteria"/>
</dbReference>
<dbReference type="HOGENOM" id="CLU_041220_0_1_3"/>
<dbReference type="OrthoDB" id="9814755at2"/>
<dbReference type="Proteomes" id="UP000001203">
    <property type="component" value="Chromosome circular"/>
</dbReference>
<dbReference type="GO" id="GO:0005829">
    <property type="term" value="C:cytosol"/>
    <property type="evidence" value="ECO:0007669"/>
    <property type="project" value="TreeGrafter"/>
</dbReference>
<dbReference type="GO" id="GO:0052908">
    <property type="term" value="F:16S rRNA (adenine(1518)-N(6)/adenine(1519)-N(6))-dimethyltransferase activity"/>
    <property type="evidence" value="ECO:0007669"/>
    <property type="project" value="UniProtKB-EC"/>
</dbReference>
<dbReference type="GO" id="GO:0003723">
    <property type="term" value="F:RNA binding"/>
    <property type="evidence" value="ECO:0007669"/>
    <property type="project" value="UniProtKB-KW"/>
</dbReference>
<dbReference type="CDD" id="cd02440">
    <property type="entry name" value="AdoMet_MTases"/>
    <property type="match status" value="1"/>
</dbReference>
<dbReference type="FunFam" id="1.10.8.100:FF:000001">
    <property type="entry name" value="Ribosomal RNA small subunit methyltransferase A"/>
    <property type="match status" value="1"/>
</dbReference>
<dbReference type="Gene3D" id="1.10.8.100">
    <property type="entry name" value="Ribosomal RNA adenine dimethylase-like, domain 2"/>
    <property type="match status" value="1"/>
</dbReference>
<dbReference type="Gene3D" id="3.40.50.150">
    <property type="entry name" value="Vaccinia Virus protein VP39"/>
    <property type="match status" value="1"/>
</dbReference>
<dbReference type="HAMAP" id="MF_00607">
    <property type="entry name" value="16SrRNA_methyltr_A"/>
    <property type="match status" value="1"/>
</dbReference>
<dbReference type="InterPro" id="IPR001737">
    <property type="entry name" value="KsgA/Erm"/>
</dbReference>
<dbReference type="InterPro" id="IPR023165">
    <property type="entry name" value="rRNA_Ade_diMease-like_C"/>
</dbReference>
<dbReference type="InterPro" id="IPR020596">
    <property type="entry name" value="rRNA_Ade_Mease_Trfase_CS"/>
</dbReference>
<dbReference type="InterPro" id="IPR020598">
    <property type="entry name" value="rRNA_Ade_methylase_Trfase_N"/>
</dbReference>
<dbReference type="InterPro" id="IPR011530">
    <property type="entry name" value="rRNA_adenine_dimethylase"/>
</dbReference>
<dbReference type="InterPro" id="IPR029063">
    <property type="entry name" value="SAM-dependent_MTases_sf"/>
</dbReference>
<dbReference type="NCBIfam" id="TIGR00755">
    <property type="entry name" value="ksgA"/>
    <property type="match status" value="1"/>
</dbReference>
<dbReference type="PANTHER" id="PTHR11727">
    <property type="entry name" value="DIMETHYLADENOSINE TRANSFERASE"/>
    <property type="match status" value="1"/>
</dbReference>
<dbReference type="PANTHER" id="PTHR11727:SF7">
    <property type="entry name" value="DIMETHYLADENOSINE TRANSFERASE-RELATED"/>
    <property type="match status" value="1"/>
</dbReference>
<dbReference type="Pfam" id="PF00398">
    <property type="entry name" value="RrnaAD"/>
    <property type="match status" value="1"/>
</dbReference>
<dbReference type="SMART" id="SM00650">
    <property type="entry name" value="rADc"/>
    <property type="match status" value="1"/>
</dbReference>
<dbReference type="SUPFAM" id="SSF53335">
    <property type="entry name" value="S-adenosyl-L-methionine-dependent methyltransferases"/>
    <property type="match status" value="1"/>
</dbReference>
<dbReference type="PROSITE" id="PS01131">
    <property type="entry name" value="RRNA_A_DIMETH"/>
    <property type="match status" value="1"/>
</dbReference>
<dbReference type="PROSITE" id="PS51689">
    <property type="entry name" value="SAM_RNA_A_N6_MT"/>
    <property type="match status" value="1"/>
</dbReference>
<sequence>MPQPRKRFAQHWLRSETALEQIIQAANLKKSDRLLEIGPGTGILTRRLLPLVQSLIAVELDWDLCKKLVKSLGDEDNFLLLQGDILKLDIATEAQQFPKFLPINKVVANIPYNITSPILDKLLGRISSPKQPSYDLIVLLIQKEVAQRIIAYPGSKNYGALSIKMQYLADCNYICDVPKKSFYPPPKVDSAVITFRPRSLLNSATNPKYLETLINLGFSSRRKMLRNNLQSLIDRDLLTEFLTEIDLNEQVRAENLDLNQWIALSNYFSQ</sequence>
<comment type="function">
    <text evidence="1">Specifically dimethylates two adjacent adenosines (A1518 and A1519) in the loop of a conserved hairpin near the 3'-end of 16S rRNA in the 30S particle. May play a critical role in biogenesis of 30S subunits.</text>
</comment>
<comment type="catalytic activity">
    <reaction evidence="1">
        <text>adenosine(1518)/adenosine(1519) in 16S rRNA + 4 S-adenosyl-L-methionine = N(6)-dimethyladenosine(1518)/N(6)-dimethyladenosine(1519) in 16S rRNA + 4 S-adenosyl-L-homocysteine + 4 H(+)</text>
        <dbReference type="Rhea" id="RHEA:19609"/>
        <dbReference type="Rhea" id="RHEA-COMP:10232"/>
        <dbReference type="Rhea" id="RHEA-COMP:10233"/>
        <dbReference type="ChEBI" id="CHEBI:15378"/>
        <dbReference type="ChEBI" id="CHEBI:57856"/>
        <dbReference type="ChEBI" id="CHEBI:59789"/>
        <dbReference type="ChEBI" id="CHEBI:74411"/>
        <dbReference type="ChEBI" id="CHEBI:74493"/>
        <dbReference type="EC" id="2.1.1.182"/>
    </reaction>
</comment>
<comment type="subcellular location">
    <subcellularLocation>
        <location evidence="1">Cytoplasm</location>
    </subcellularLocation>
</comment>
<comment type="similarity">
    <text evidence="1">Belongs to the class I-like SAM-binding methyltransferase superfamily. rRNA adenine N(6)-methyltransferase family. RsmA subfamily.</text>
</comment>
<gene>
    <name evidence="1" type="primary">rsmA</name>
    <name evidence="1" type="synonym">ksgA</name>
    <name type="ordered locus">cce_2498</name>
</gene>
<accession>B1WRJ7</accession>
<protein>
    <recommendedName>
        <fullName evidence="1">Ribosomal RNA small subunit methyltransferase A</fullName>
        <ecNumber evidence="1">2.1.1.182</ecNumber>
    </recommendedName>
    <alternativeName>
        <fullName evidence="1">16S rRNA (adenine(1518)-N(6)/adenine(1519)-N(6))-dimethyltransferase</fullName>
    </alternativeName>
    <alternativeName>
        <fullName evidence="1">16S rRNA dimethyladenosine transferase</fullName>
    </alternativeName>
    <alternativeName>
        <fullName evidence="1">16S rRNA dimethylase</fullName>
    </alternativeName>
    <alternativeName>
        <fullName evidence="1">S-adenosylmethionine-6-N', N'-adenosyl(rRNA) dimethyltransferase</fullName>
    </alternativeName>
</protein>
<reference key="1">
    <citation type="journal article" date="2008" name="Proc. Natl. Acad. Sci. U.S.A.">
        <title>The genome of Cyanothece 51142, a unicellular diazotrophic cyanobacterium important in the marine nitrogen cycle.</title>
        <authorList>
            <person name="Welsh E.A."/>
            <person name="Liberton M."/>
            <person name="Stoeckel J."/>
            <person name="Loh T."/>
            <person name="Elvitigala T."/>
            <person name="Wang C."/>
            <person name="Wollam A."/>
            <person name="Fulton R.S."/>
            <person name="Clifton S.W."/>
            <person name="Jacobs J.M."/>
            <person name="Aurora R."/>
            <person name="Ghosh B.K."/>
            <person name="Sherman L.A."/>
            <person name="Smith R.D."/>
            <person name="Wilson R.K."/>
            <person name="Pakrasi H.B."/>
        </authorList>
    </citation>
    <scope>NUCLEOTIDE SEQUENCE [LARGE SCALE GENOMIC DNA]</scope>
    <source>
        <strain>ATCC 51142 / BH68</strain>
    </source>
</reference>